<organism>
    <name type="scientific">Shewanella sediminis (strain HAW-EB3)</name>
    <dbReference type="NCBI Taxonomy" id="425104"/>
    <lineage>
        <taxon>Bacteria</taxon>
        <taxon>Pseudomonadati</taxon>
        <taxon>Pseudomonadota</taxon>
        <taxon>Gammaproteobacteria</taxon>
        <taxon>Alteromonadales</taxon>
        <taxon>Shewanellaceae</taxon>
        <taxon>Shewanella</taxon>
    </lineage>
</organism>
<gene>
    <name type="ordered locus">Ssed_0302</name>
</gene>
<dbReference type="EMBL" id="CP000821">
    <property type="protein sequence ID" value="ABV34915.1"/>
    <property type="status" value="ALT_INIT"/>
    <property type="molecule type" value="Genomic_DNA"/>
</dbReference>
<dbReference type="RefSeq" id="WP_041421489.1">
    <property type="nucleotide sequence ID" value="NC_009831.1"/>
</dbReference>
<dbReference type="STRING" id="425104.Ssed_0302"/>
<dbReference type="KEGG" id="sse:Ssed_0302"/>
<dbReference type="eggNOG" id="COG1295">
    <property type="taxonomic scope" value="Bacteria"/>
</dbReference>
<dbReference type="HOGENOM" id="CLU_032288_0_0_6"/>
<dbReference type="OrthoDB" id="9808671at2"/>
<dbReference type="Proteomes" id="UP000002015">
    <property type="component" value="Chromosome"/>
</dbReference>
<dbReference type="GO" id="GO:0005886">
    <property type="term" value="C:plasma membrane"/>
    <property type="evidence" value="ECO:0007669"/>
    <property type="project" value="UniProtKB-SubCell"/>
</dbReference>
<dbReference type="HAMAP" id="MF_00672">
    <property type="entry name" value="UPF0761"/>
    <property type="match status" value="1"/>
</dbReference>
<dbReference type="InterPro" id="IPR023679">
    <property type="entry name" value="UPF0761_bac"/>
</dbReference>
<dbReference type="InterPro" id="IPR017039">
    <property type="entry name" value="Virul_fac_BrkB"/>
</dbReference>
<dbReference type="NCBIfam" id="NF002457">
    <property type="entry name" value="PRK01637.1"/>
    <property type="match status" value="1"/>
</dbReference>
<dbReference type="NCBIfam" id="TIGR00765">
    <property type="entry name" value="yihY_not_rbn"/>
    <property type="match status" value="1"/>
</dbReference>
<dbReference type="PANTHER" id="PTHR30213">
    <property type="entry name" value="INNER MEMBRANE PROTEIN YHJD"/>
    <property type="match status" value="1"/>
</dbReference>
<dbReference type="PANTHER" id="PTHR30213:SF0">
    <property type="entry name" value="UPF0761 MEMBRANE PROTEIN YIHY"/>
    <property type="match status" value="1"/>
</dbReference>
<dbReference type="Pfam" id="PF03631">
    <property type="entry name" value="Virul_fac_BrkB"/>
    <property type="match status" value="1"/>
</dbReference>
<dbReference type="PIRSF" id="PIRSF035875">
    <property type="entry name" value="RNase_BN"/>
    <property type="match status" value="1"/>
</dbReference>
<feature type="chain" id="PRO_0000391057" description="UPF0761 membrane protein Ssed_0302">
    <location>
        <begin position="1"/>
        <end position="318"/>
    </location>
</feature>
<feature type="transmembrane region" description="Helical" evidence="1">
    <location>
        <begin position="45"/>
        <end position="65"/>
    </location>
</feature>
<feature type="transmembrane region" description="Helical" evidence="1">
    <location>
        <begin position="102"/>
        <end position="122"/>
    </location>
</feature>
<feature type="transmembrane region" description="Helical" evidence="1">
    <location>
        <begin position="137"/>
        <end position="157"/>
    </location>
</feature>
<feature type="transmembrane region" description="Helical" evidence="1">
    <location>
        <begin position="179"/>
        <end position="199"/>
    </location>
</feature>
<feature type="transmembrane region" description="Helical" evidence="1">
    <location>
        <begin position="206"/>
        <end position="226"/>
    </location>
</feature>
<feature type="transmembrane region" description="Helical" evidence="1">
    <location>
        <begin position="247"/>
        <end position="267"/>
    </location>
</feature>
<feature type="region of interest" description="Disordered" evidence="2">
    <location>
        <begin position="282"/>
        <end position="318"/>
    </location>
</feature>
<feature type="compositionally biased region" description="Basic and acidic residues" evidence="2">
    <location>
        <begin position="282"/>
        <end position="298"/>
    </location>
</feature>
<feature type="compositionally biased region" description="Polar residues" evidence="2">
    <location>
        <begin position="301"/>
        <end position="310"/>
    </location>
</feature>
<comment type="subcellular location">
    <subcellularLocation>
        <location evidence="1">Cell inner membrane</location>
        <topology evidence="1">Multi-pass membrane protein</topology>
    </subcellularLocation>
</comment>
<comment type="similarity">
    <text evidence="1">Belongs to the UPF0761 family.</text>
</comment>
<comment type="sequence caution" evidence="3">
    <conflict type="erroneous initiation">
        <sequence resource="EMBL-CDS" id="ABV34915"/>
    </conflict>
</comment>
<evidence type="ECO:0000255" key="1">
    <source>
        <dbReference type="HAMAP-Rule" id="MF_00672"/>
    </source>
</evidence>
<evidence type="ECO:0000256" key="2">
    <source>
        <dbReference type="SAM" id="MobiDB-lite"/>
    </source>
</evidence>
<evidence type="ECO:0000305" key="3"/>
<sequence length="318" mass="35242">MIKKIDGTQLHTFVLSTWHFMIHLKQRLAEDQINIRAGHLAYVTLLSLVPMVAVTMSMLSAFPVFSGIRGQIEGFIYNNFLPAAGDTVQVYINEFVSNASKGTAVGIAALMVVAIMLISAIDKALNNIWRTTEKRSMVVSFSMYWMVLTLGPVLMGASLVATSYVVSLKVFNGSDLSGVVPVLVERLPMFFSVATFLLIYMVVPNIKVKFFHALLGAIVAALLFEFGKKGFAIYLTKFPTYEAIYGALATIPILFMWVYLSWIIVLLGAEITAAMPEYLDKRQSGKDEESEKKAEAHDPQISFSISTAVNESKKENRQ</sequence>
<name>Y302_SHESH</name>
<reference key="1">
    <citation type="submission" date="2007-08" db="EMBL/GenBank/DDBJ databases">
        <title>Complete sequence of Shewanella sediminis HAW-EB3.</title>
        <authorList>
            <consortium name="US DOE Joint Genome Institute"/>
            <person name="Copeland A."/>
            <person name="Lucas S."/>
            <person name="Lapidus A."/>
            <person name="Barry K."/>
            <person name="Glavina del Rio T."/>
            <person name="Dalin E."/>
            <person name="Tice H."/>
            <person name="Pitluck S."/>
            <person name="Chertkov O."/>
            <person name="Brettin T."/>
            <person name="Bruce D."/>
            <person name="Detter J.C."/>
            <person name="Han C."/>
            <person name="Schmutz J."/>
            <person name="Larimer F."/>
            <person name="Land M."/>
            <person name="Hauser L."/>
            <person name="Kyrpides N."/>
            <person name="Kim E."/>
            <person name="Zhao J.-S."/>
            <person name="Richardson P."/>
        </authorList>
    </citation>
    <scope>NUCLEOTIDE SEQUENCE [LARGE SCALE GENOMIC DNA]</scope>
    <source>
        <strain>HAW-EB3</strain>
    </source>
</reference>
<proteinExistence type="inferred from homology"/>
<keyword id="KW-0997">Cell inner membrane</keyword>
<keyword id="KW-1003">Cell membrane</keyword>
<keyword id="KW-0472">Membrane</keyword>
<keyword id="KW-1185">Reference proteome</keyword>
<keyword id="KW-0812">Transmembrane</keyword>
<keyword id="KW-1133">Transmembrane helix</keyword>
<protein>
    <recommendedName>
        <fullName evidence="1">UPF0761 membrane protein Ssed_0302</fullName>
    </recommendedName>
</protein>
<accession>A8FPZ2</accession>